<sequence>MSSAEDGELDPQIQIELENLNSATDEINKLEIELEEANSTFRILLNESTRRLKVSSKKLGNCIEKARPYYEALDKAREAQIECQKAAVKFQRANEIHAAAKETVALAEQRFMSNSHEWQFDNAWQEMLNHATQKVMDAETQKADCHAEHQRLTKLFNAAEQKLQQLEDRFRRSINKSRPYFEEKQVCQDQLQTQKNRIQELQQQVAGAKSTYSTALRNLERISEDIHRQRGDFPTPPGPREPGVGAELNSPTSSALPSLPDFQLELEKCDYPSIAGSQMSLGAKTPQAAAETEDEEDACDYDETGAGELRGVVDERDLEALRQKVKILAVRPIEGGDGQQQNDVWEHELKATVDKLDHLMMLKETAKRQQTNRLKSTEQRPDSLGAEALKRHCDVVEVKVTSCATTASLPVTPHHQLNHLAPPTPIKKLQQQLAPLPSVNVSMRELPLLARLSNELLDRSSAAFGGVRKTLRRRSLE</sequence>
<keyword id="KW-0175">Coiled coil</keyword>
<keyword id="KW-0597">Phosphoprotein</keyword>
<keyword id="KW-1185">Reference proteome</keyword>
<keyword id="KW-0729">SH3-binding</keyword>
<name>3BP5H_DROME</name>
<accession>Q9V785</accession>
<feature type="chain" id="PRO_0000064367" description="SH3 domain-binding protein 5 homolog">
    <location>
        <begin position="1"/>
        <end position="477"/>
    </location>
</feature>
<feature type="region of interest" description="Disordered" evidence="2">
    <location>
        <begin position="224"/>
        <end position="258"/>
    </location>
</feature>
<feature type="region of interest" description="Disordered" evidence="2">
    <location>
        <begin position="276"/>
        <end position="306"/>
    </location>
</feature>
<feature type="coiled-coil region" evidence="1">
    <location>
        <begin position="12"/>
        <end position="95"/>
    </location>
</feature>
<feature type="coiled-coil region" evidence="1">
    <location>
        <begin position="122"/>
        <end position="221"/>
    </location>
</feature>
<feature type="compositionally biased region" description="Acidic residues" evidence="2">
    <location>
        <begin position="291"/>
        <end position="305"/>
    </location>
</feature>
<feature type="modified residue" description="Phosphoserine" evidence="3">
    <location>
        <position position="113"/>
    </location>
</feature>
<feature type="modified residue" description="Phosphoserine" evidence="3">
    <location>
        <position position="115"/>
    </location>
</feature>
<dbReference type="EMBL" id="AE013599">
    <property type="protein sequence ID" value="AAF58174.5"/>
    <property type="molecule type" value="Genomic_DNA"/>
</dbReference>
<dbReference type="EMBL" id="AY058328">
    <property type="protein sequence ID" value="AAL13557.1"/>
    <property type="molecule type" value="mRNA"/>
</dbReference>
<dbReference type="RefSeq" id="NP_611010.4">
    <property type="nucleotide sequence ID" value="NM_137166.5"/>
</dbReference>
<dbReference type="SMR" id="Q9V785"/>
<dbReference type="BioGRID" id="62415">
    <property type="interactions" value="25"/>
</dbReference>
<dbReference type="FunCoup" id="Q9V785">
    <property type="interactions" value="1431"/>
</dbReference>
<dbReference type="IntAct" id="Q9V785">
    <property type="interactions" value="2"/>
</dbReference>
<dbReference type="STRING" id="7227.FBpp0290722"/>
<dbReference type="GlyGen" id="Q9V785">
    <property type="glycosylation" value="1 site"/>
</dbReference>
<dbReference type="iPTMnet" id="Q9V785"/>
<dbReference type="PaxDb" id="7227-FBpp0290722"/>
<dbReference type="DNASU" id="36674"/>
<dbReference type="EnsemblMetazoa" id="FBtr0301507">
    <property type="protein sequence ID" value="FBpp0290722"/>
    <property type="gene ID" value="FBgn0033988"/>
</dbReference>
<dbReference type="GeneID" id="36674"/>
<dbReference type="KEGG" id="dme:Dmel_CG7761"/>
<dbReference type="UCSC" id="CG7761-RA">
    <property type="organism name" value="d. melanogaster"/>
</dbReference>
<dbReference type="AGR" id="FB:FBgn0033988"/>
<dbReference type="CTD" id="36674"/>
<dbReference type="FlyBase" id="FBgn0033988">
    <property type="gene designation" value="pcs"/>
</dbReference>
<dbReference type="VEuPathDB" id="VectorBase:FBgn0033988"/>
<dbReference type="eggNOG" id="KOG2008">
    <property type="taxonomic scope" value="Eukaryota"/>
</dbReference>
<dbReference type="GeneTree" id="ENSGT00390000018500"/>
<dbReference type="HOGENOM" id="CLU_043711_2_1_1"/>
<dbReference type="InParanoid" id="Q9V785"/>
<dbReference type="OMA" id="AQIECQK"/>
<dbReference type="OrthoDB" id="446789at2759"/>
<dbReference type="PhylomeDB" id="Q9V785"/>
<dbReference type="SignaLink" id="Q9V785"/>
<dbReference type="BioGRID-ORCS" id="36674">
    <property type="hits" value="0 hits in 3 CRISPR screens"/>
</dbReference>
<dbReference type="ChiTaRS" id="pcs">
    <property type="organism name" value="fly"/>
</dbReference>
<dbReference type="GenomeRNAi" id="36674"/>
<dbReference type="PRO" id="PR:Q9V785"/>
<dbReference type="Proteomes" id="UP000000803">
    <property type="component" value="Chromosome 2R"/>
</dbReference>
<dbReference type="Bgee" id="FBgn0033988">
    <property type="expression patterns" value="Expressed in nurse follicle cell (Drosophila) in ovary and 291 other cell types or tissues"/>
</dbReference>
<dbReference type="GO" id="GO:0005737">
    <property type="term" value="C:cytoplasm"/>
    <property type="evidence" value="ECO:0000314"/>
    <property type="project" value="FlyBase"/>
</dbReference>
<dbReference type="GO" id="GO:0098548">
    <property type="term" value="C:cytoplasmic side of Golgi membrane"/>
    <property type="evidence" value="ECO:0000314"/>
    <property type="project" value="FlyBase"/>
</dbReference>
<dbReference type="GO" id="GO:0005886">
    <property type="term" value="C:plasma membrane"/>
    <property type="evidence" value="ECO:0000314"/>
    <property type="project" value="FlyBase"/>
</dbReference>
<dbReference type="GO" id="GO:0005085">
    <property type="term" value="F:guanyl-nucleotide exchange factor activity"/>
    <property type="evidence" value="ECO:0000314"/>
    <property type="project" value="FlyBase"/>
</dbReference>
<dbReference type="GO" id="GO:0004860">
    <property type="term" value="F:protein kinase inhibitor activity"/>
    <property type="evidence" value="ECO:0000318"/>
    <property type="project" value="GO_Central"/>
</dbReference>
<dbReference type="GO" id="GO:0030292">
    <property type="term" value="F:protein tyrosine kinase inhibitor activity"/>
    <property type="evidence" value="ECO:0000316"/>
    <property type="project" value="FlyBase"/>
</dbReference>
<dbReference type="GO" id="GO:0017124">
    <property type="term" value="F:SH3 domain binding"/>
    <property type="evidence" value="ECO:0007669"/>
    <property type="project" value="UniProtKB-KW"/>
</dbReference>
<dbReference type="GO" id="GO:0009952">
    <property type="term" value="P:anterior/posterior pattern specification"/>
    <property type="evidence" value="ECO:0000315"/>
    <property type="project" value="FlyBase"/>
</dbReference>
<dbReference type="GO" id="GO:0007301">
    <property type="term" value="P:female germline ring canal formation"/>
    <property type="evidence" value="ECO:0000315"/>
    <property type="project" value="FlyBase"/>
</dbReference>
<dbReference type="GO" id="GO:0035556">
    <property type="term" value="P:intracellular signal transduction"/>
    <property type="evidence" value="ECO:0000318"/>
    <property type="project" value="GO_Central"/>
</dbReference>
<dbReference type="GO" id="GO:0007498">
    <property type="term" value="P:mesoderm development"/>
    <property type="evidence" value="ECO:0000315"/>
    <property type="project" value="FlyBase"/>
</dbReference>
<dbReference type="GO" id="GO:0042694">
    <property type="term" value="P:muscle cell fate specification"/>
    <property type="evidence" value="ECO:0000315"/>
    <property type="project" value="FlyBase"/>
</dbReference>
<dbReference type="GO" id="GO:0007517">
    <property type="term" value="P:muscle organ development"/>
    <property type="evidence" value="ECO:0000315"/>
    <property type="project" value="FlyBase"/>
</dbReference>
<dbReference type="GO" id="GO:0048644">
    <property type="term" value="P:muscle organ morphogenesis"/>
    <property type="evidence" value="ECO:0000315"/>
    <property type="project" value="FlyBase"/>
</dbReference>
<dbReference type="InterPro" id="IPR007940">
    <property type="entry name" value="SH3BP5"/>
</dbReference>
<dbReference type="PANTHER" id="PTHR19423">
    <property type="entry name" value="SH3 DOMAIN-BINDING PROTEIN 5"/>
    <property type="match status" value="1"/>
</dbReference>
<dbReference type="PANTHER" id="PTHR19423:SF1">
    <property type="entry name" value="SH3 DOMAIN-BINDING PROTEIN 5"/>
    <property type="match status" value="1"/>
</dbReference>
<dbReference type="Pfam" id="PF05276">
    <property type="entry name" value="SH3BP5"/>
    <property type="match status" value="1"/>
</dbReference>
<gene>
    <name type="primary">pcs</name>
    <name type="ORF">CG7761</name>
</gene>
<comment type="similarity">
    <text evidence="4">Belongs to the SH3BP5 family.</text>
</comment>
<reference key="1">
    <citation type="journal article" date="2000" name="Science">
        <title>The genome sequence of Drosophila melanogaster.</title>
        <authorList>
            <person name="Adams M.D."/>
            <person name="Celniker S.E."/>
            <person name="Holt R.A."/>
            <person name="Evans C.A."/>
            <person name="Gocayne J.D."/>
            <person name="Amanatides P.G."/>
            <person name="Scherer S.E."/>
            <person name="Li P.W."/>
            <person name="Hoskins R.A."/>
            <person name="Galle R.F."/>
            <person name="George R.A."/>
            <person name="Lewis S.E."/>
            <person name="Richards S."/>
            <person name="Ashburner M."/>
            <person name="Henderson S.N."/>
            <person name="Sutton G.G."/>
            <person name="Wortman J.R."/>
            <person name="Yandell M.D."/>
            <person name="Zhang Q."/>
            <person name="Chen L.X."/>
            <person name="Brandon R.C."/>
            <person name="Rogers Y.-H.C."/>
            <person name="Blazej R.G."/>
            <person name="Champe M."/>
            <person name="Pfeiffer B.D."/>
            <person name="Wan K.H."/>
            <person name="Doyle C."/>
            <person name="Baxter E.G."/>
            <person name="Helt G."/>
            <person name="Nelson C.R."/>
            <person name="Miklos G.L.G."/>
            <person name="Abril J.F."/>
            <person name="Agbayani A."/>
            <person name="An H.-J."/>
            <person name="Andrews-Pfannkoch C."/>
            <person name="Baldwin D."/>
            <person name="Ballew R.M."/>
            <person name="Basu A."/>
            <person name="Baxendale J."/>
            <person name="Bayraktaroglu L."/>
            <person name="Beasley E.M."/>
            <person name="Beeson K.Y."/>
            <person name="Benos P.V."/>
            <person name="Berman B.P."/>
            <person name="Bhandari D."/>
            <person name="Bolshakov S."/>
            <person name="Borkova D."/>
            <person name="Botchan M.R."/>
            <person name="Bouck J."/>
            <person name="Brokstein P."/>
            <person name="Brottier P."/>
            <person name="Burtis K.C."/>
            <person name="Busam D.A."/>
            <person name="Butler H."/>
            <person name="Cadieu E."/>
            <person name="Center A."/>
            <person name="Chandra I."/>
            <person name="Cherry J.M."/>
            <person name="Cawley S."/>
            <person name="Dahlke C."/>
            <person name="Davenport L.B."/>
            <person name="Davies P."/>
            <person name="de Pablos B."/>
            <person name="Delcher A."/>
            <person name="Deng Z."/>
            <person name="Mays A.D."/>
            <person name="Dew I."/>
            <person name="Dietz S.M."/>
            <person name="Dodson K."/>
            <person name="Doup L.E."/>
            <person name="Downes M."/>
            <person name="Dugan-Rocha S."/>
            <person name="Dunkov B.C."/>
            <person name="Dunn P."/>
            <person name="Durbin K.J."/>
            <person name="Evangelista C.C."/>
            <person name="Ferraz C."/>
            <person name="Ferriera S."/>
            <person name="Fleischmann W."/>
            <person name="Fosler C."/>
            <person name="Gabrielian A.E."/>
            <person name="Garg N.S."/>
            <person name="Gelbart W.M."/>
            <person name="Glasser K."/>
            <person name="Glodek A."/>
            <person name="Gong F."/>
            <person name="Gorrell J.H."/>
            <person name="Gu Z."/>
            <person name="Guan P."/>
            <person name="Harris M."/>
            <person name="Harris N.L."/>
            <person name="Harvey D.A."/>
            <person name="Heiman T.J."/>
            <person name="Hernandez J.R."/>
            <person name="Houck J."/>
            <person name="Hostin D."/>
            <person name="Houston K.A."/>
            <person name="Howland T.J."/>
            <person name="Wei M.-H."/>
            <person name="Ibegwam C."/>
            <person name="Jalali M."/>
            <person name="Kalush F."/>
            <person name="Karpen G.H."/>
            <person name="Ke Z."/>
            <person name="Kennison J.A."/>
            <person name="Ketchum K.A."/>
            <person name="Kimmel B.E."/>
            <person name="Kodira C.D."/>
            <person name="Kraft C.L."/>
            <person name="Kravitz S."/>
            <person name="Kulp D."/>
            <person name="Lai Z."/>
            <person name="Lasko P."/>
            <person name="Lei Y."/>
            <person name="Levitsky A.A."/>
            <person name="Li J.H."/>
            <person name="Li Z."/>
            <person name="Liang Y."/>
            <person name="Lin X."/>
            <person name="Liu X."/>
            <person name="Mattei B."/>
            <person name="McIntosh T.C."/>
            <person name="McLeod M.P."/>
            <person name="McPherson D."/>
            <person name="Merkulov G."/>
            <person name="Milshina N.V."/>
            <person name="Mobarry C."/>
            <person name="Morris J."/>
            <person name="Moshrefi A."/>
            <person name="Mount S.M."/>
            <person name="Moy M."/>
            <person name="Murphy B."/>
            <person name="Murphy L."/>
            <person name="Muzny D.M."/>
            <person name="Nelson D.L."/>
            <person name="Nelson D.R."/>
            <person name="Nelson K.A."/>
            <person name="Nixon K."/>
            <person name="Nusskern D.R."/>
            <person name="Pacleb J.M."/>
            <person name="Palazzolo M."/>
            <person name="Pittman G.S."/>
            <person name="Pan S."/>
            <person name="Pollard J."/>
            <person name="Puri V."/>
            <person name="Reese M.G."/>
            <person name="Reinert K."/>
            <person name="Remington K."/>
            <person name="Saunders R.D.C."/>
            <person name="Scheeler F."/>
            <person name="Shen H."/>
            <person name="Shue B.C."/>
            <person name="Siden-Kiamos I."/>
            <person name="Simpson M."/>
            <person name="Skupski M.P."/>
            <person name="Smith T.J."/>
            <person name="Spier E."/>
            <person name="Spradling A.C."/>
            <person name="Stapleton M."/>
            <person name="Strong R."/>
            <person name="Sun E."/>
            <person name="Svirskas R."/>
            <person name="Tector C."/>
            <person name="Turner R."/>
            <person name="Venter E."/>
            <person name="Wang A.H."/>
            <person name="Wang X."/>
            <person name="Wang Z.-Y."/>
            <person name="Wassarman D.A."/>
            <person name="Weinstock G.M."/>
            <person name="Weissenbach J."/>
            <person name="Williams S.M."/>
            <person name="Woodage T."/>
            <person name="Worley K.C."/>
            <person name="Wu D."/>
            <person name="Yang S."/>
            <person name="Yao Q.A."/>
            <person name="Ye J."/>
            <person name="Yeh R.-F."/>
            <person name="Zaveri J.S."/>
            <person name="Zhan M."/>
            <person name="Zhang G."/>
            <person name="Zhao Q."/>
            <person name="Zheng L."/>
            <person name="Zheng X.H."/>
            <person name="Zhong F.N."/>
            <person name="Zhong W."/>
            <person name="Zhou X."/>
            <person name="Zhu S.C."/>
            <person name="Zhu X."/>
            <person name="Smith H.O."/>
            <person name="Gibbs R.A."/>
            <person name="Myers E.W."/>
            <person name="Rubin G.M."/>
            <person name="Venter J.C."/>
        </authorList>
    </citation>
    <scope>NUCLEOTIDE SEQUENCE [LARGE SCALE GENOMIC DNA]</scope>
    <source>
        <strain>Berkeley</strain>
    </source>
</reference>
<reference key="2">
    <citation type="journal article" date="2002" name="Genome Biol.">
        <title>Annotation of the Drosophila melanogaster euchromatic genome: a systematic review.</title>
        <authorList>
            <person name="Misra S."/>
            <person name="Crosby M.A."/>
            <person name="Mungall C.J."/>
            <person name="Matthews B.B."/>
            <person name="Campbell K.S."/>
            <person name="Hradecky P."/>
            <person name="Huang Y."/>
            <person name="Kaminker J.S."/>
            <person name="Millburn G.H."/>
            <person name="Prochnik S.E."/>
            <person name="Smith C.D."/>
            <person name="Tupy J.L."/>
            <person name="Whitfield E.J."/>
            <person name="Bayraktaroglu L."/>
            <person name="Berman B.P."/>
            <person name="Bettencourt B.R."/>
            <person name="Celniker S.E."/>
            <person name="de Grey A.D.N.J."/>
            <person name="Drysdale R.A."/>
            <person name="Harris N.L."/>
            <person name="Richter J."/>
            <person name="Russo S."/>
            <person name="Schroeder A.J."/>
            <person name="Shu S.Q."/>
            <person name="Stapleton M."/>
            <person name="Yamada C."/>
            <person name="Ashburner M."/>
            <person name="Gelbart W.M."/>
            <person name="Rubin G.M."/>
            <person name="Lewis S.E."/>
        </authorList>
    </citation>
    <scope>GENOME REANNOTATION</scope>
    <source>
        <strain>Berkeley</strain>
    </source>
</reference>
<reference key="3">
    <citation type="journal article" date="2002" name="Genome Biol.">
        <title>A Drosophila full-length cDNA resource.</title>
        <authorList>
            <person name="Stapleton M."/>
            <person name="Carlson J.W."/>
            <person name="Brokstein P."/>
            <person name="Yu C."/>
            <person name="Champe M."/>
            <person name="George R.A."/>
            <person name="Guarin H."/>
            <person name="Kronmiller B."/>
            <person name="Pacleb J.M."/>
            <person name="Park S."/>
            <person name="Wan K.H."/>
            <person name="Rubin G.M."/>
            <person name="Celniker S.E."/>
        </authorList>
    </citation>
    <scope>NUCLEOTIDE SEQUENCE [LARGE SCALE MRNA]</scope>
    <source>
        <strain>Berkeley</strain>
        <tissue>Head</tissue>
    </source>
</reference>
<reference key="4">
    <citation type="journal article" date="2008" name="J. Proteome Res.">
        <title>Phosphoproteome analysis of Drosophila melanogaster embryos.</title>
        <authorList>
            <person name="Zhai B."/>
            <person name="Villen J."/>
            <person name="Beausoleil S.A."/>
            <person name="Mintseris J."/>
            <person name="Gygi S.P."/>
        </authorList>
    </citation>
    <scope>PHOSPHORYLATION [LARGE SCALE ANALYSIS] AT SER-113 AND SER-115</scope>
    <scope>IDENTIFICATION BY MASS SPECTROMETRY</scope>
    <source>
        <tissue>Embryo</tissue>
    </source>
</reference>
<proteinExistence type="evidence at protein level"/>
<evidence type="ECO:0000255" key="1"/>
<evidence type="ECO:0000256" key="2">
    <source>
        <dbReference type="SAM" id="MobiDB-lite"/>
    </source>
</evidence>
<evidence type="ECO:0000269" key="3">
    <source>
    </source>
</evidence>
<evidence type="ECO:0000305" key="4"/>
<protein>
    <recommendedName>
        <fullName>SH3 domain-binding protein 5 homolog</fullName>
    </recommendedName>
    <alternativeName>
        <fullName>Protein parcase</fullName>
    </alternativeName>
</protein>
<organism>
    <name type="scientific">Drosophila melanogaster</name>
    <name type="common">Fruit fly</name>
    <dbReference type="NCBI Taxonomy" id="7227"/>
    <lineage>
        <taxon>Eukaryota</taxon>
        <taxon>Metazoa</taxon>
        <taxon>Ecdysozoa</taxon>
        <taxon>Arthropoda</taxon>
        <taxon>Hexapoda</taxon>
        <taxon>Insecta</taxon>
        <taxon>Pterygota</taxon>
        <taxon>Neoptera</taxon>
        <taxon>Endopterygota</taxon>
        <taxon>Diptera</taxon>
        <taxon>Brachycera</taxon>
        <taxon>Muscomorpha</taxon>
        <taxon>Ephydroidea</taxon>
        <taxon>Drosophilidae</taxon>
        <taxon>Drosophila</taxon>
        <taxon>Sophophora</taxon>
    </lineage>
</organism>